<dbReference type="EMBL" id="CP000681">
    <property type="protein sequence ID" value="ABP74191.1"/>
    <property type="molecule type" value="Genomic_DNA"/>
</dbReference>
<dbReference type="SMR" id="A4Y2K8"/>
<dbReference type="STRING" id="319224.Sputcn32_0459"/>
<dbReference type="KEGG" id="spc:Sputcn32_0459"/>
<dbReference type="eggNOG" id="COG1309">
    <property type="taxonomic scope" value="Bacteria"/>
</dbReference>
<dbReference type="HOGENOM" id="CLU_069356_5_0_6"/>
<dbReference type="GO" id="GO:0043590">
    <property type="term" value="C:bacterial nucleoid"/>
    <property type="evidence" value="ECO:0007669"/>
    <property type="project" value="UniProtKB-UniRule"/>
</dbReference>
<dbReference type="GO" id="GO:0005737">
    <property type="term" value="C:cytoplasm"/>
    <property type="evidence" value="ECO:0007669"/>
    <property type="project" value="UniProtKB-UniRule"/>
</dbReference>
<dbReference type="GO" id="GO:0043565">
    <property type="term" value="F:sequence-specific DNA binding"/>
    <property type="evidence" value="ECO:0007669"/>
    <property type="project" value="UniProtKB-UniRule"/>
</dbReference>
<dbReference type="GO" id="GO:0051301">
    <property type="term" value="P:cell division"/>
    <property type="evidence" value="ECO:0007669"/>
    <property type="project" value="UniProtKB-KW"/>
</dbReference>
<dbReference type="GO" id="GO:0010974">
    <property type="term" value="P:negative regulation of division septum assembly"/>
    <property type="evidence" value="ECO:0007669"/>
    <property type="project" value="InterPro"/>
</dbReference>
<dbReference type="Gene3D" id="1.10.357.10">
    <property type="entry name" value="Tetracycline Repressor, domain 2"/>
    <property type="match status" value="1"/>
</dbReference>
<dbReference type="HAMAP" id="MF_01839">
    <property type="entry name" value="NO_factor_SlmA"/>
    <property type="match status" value="1"/>
</dbReference>
<dbReference type="InterPro" id="IPR009057">
    <property type="entry name" value="Homeodomain-like_sf"/>
</dbReference>
<dbReference type="InterPro" id="IPR050624">
    <property type="entry name" value="HTH-type_Tx_Regulator"/>
</dbReference>
<dbReference type="InterPro" id="IPR001647">
    <property type="entry name" value="HTH_TetR"/>
</dbReference>
<dbReference type="InterPro" id="IPR023769">
    <property type="entry name" value="NO_SlmA"/>
</dbReference>
<dbReference type="InterPro" id="IPR054580">
    <property type="entry name" value="SlmA-like_C"/>
</dbReference>
<dbReference type="NCBIfam" id="NF007015">
    <property type="entry name" value="PRK09480.1"/>
    <property type="match status" value="1"/>
</dbReference>
<dbReference type="PANTHER" id="PTHR43479">
    <property type="entry name" value="ACREF/ENVCD OPERON REPRESSOR-RELATED"/>
    <property type="match status" value="1"/>
</dbReference>
<dbReference type="PANTHER" id="PTHR43479:SF11">
    <property type="entry name" value="ACREF_ENVCD OPERON REPRESSOR-RELATED"/>
    <property type="match status" value="1"/>
</dbReference>
<dbReference type="Pfam" id="PF22276">
    <property type="entry name" value="SlmA-like_C"/>
    <property type="match status" value="1"/>
</dbReference>
<dbReference type="Pfam" id="PF00440">
    <property type="entry name" value="TetR_N"/>
    <property type="match status" value="1"/>
</dbReference>
<dbReference type="SUPFAM" id="SSF46689">
    <property type="entry name" value="Homeodomain-like"/>
    <property type="match status" value="1"/>
</dbReference>
<dbReference type="PROSITE" id="PS50977">
    <property type="entry name" value="HTH_TETR_2"/>
    <property type="match status" value="1"/>
</dbReference>
<evidence type="ECO:0000255" key="1">
    <source>
        <dbReference type="HAMAP-Rule" id="MF_01839"/>
    </source>
</evidence>
<organism>
    <name type="scientific">Shewanella putrefaciens (strain CN-32 / ATCC BAA-453)</name>
    <dbReference type="NCBI Taxonomy" id="319224"/>
    <lineage>
        <taxon>Bacteria</taxon>
        <taxon>Pseudomonadati</taxon>
        <taxon>Pseudomonadota</taxon>
        <taxon>Gammaproteobacteria</taxon>
        <taxon>Alteromonadales</taxon>
        <taxon>Shewanellaceae</taxon>
        <taxon>Shewanella</taxon>
    </lineage>
</organism>
<comment type="function">
    <text evidence="1">Required for nucleoid occlusion (NO) phenomenon, which prevents Z-ring formation and cell division over the nucleoid. Acts as a DNA-associated cell division inhibitor that binds simultaneously chromosomal DNA and FtsZ, and disrupts the assembly of FtsZ polymers. SlmA-DNA-binding sequences (SBS) are dispersed on non-Ter regions of the chromosome, preventing FtsZ polymerization at these regions.</text>
</comment>
<comment type="subunit">
    <text evidence="1">Homodimer. Interacts with FtsZ.</text>
</comment>
<comment type="subcellular location">
    <subcellularLocation>
        <location evidence="1">Cytoplasm</location>
        <location evidence="1">Nucleoid</location>
    </subcellularLocation>
</comment>
<comment type="similarity">
    <text evidence="1">Belongs to the nucleoid occlusion factor SlmA family.</text>
</comment>
<reference key="1">
    <citation type="submission" date="2007-04" db="EMBL/GenBank/DDBJ databases">
        <title>Complete sequence of Shewanella putrefaciens CN-32.</title>
        <authorList>
            <consortium name="US DOE Joint Genome Institute"/>
            <person name="Copeland A."/>
            <person name="Lucas S."/>
            <person name="Lapidus A."/>
            <person name="Barry K."/>
            <person name="Detter J.C."/>
            <person name="Glavina del Rio T."/>
            <person name="Hammon N."/>
            <person name="Israni S."/>
            <person name="Dalin E."/>
            <person name="Tice H."/>
            <person name="Pitluck S."/>
            <person name="Chain P."/>
            <person name="Malfatti S."/>
            <person name="Shin M."/>
            <person name="Vergez L."/>
            <person name="Schmutz J."/>
            <person name="Larimer F."/>
            <person name="Land M."/>
            <person name="Hauser L."/>
            <person name="Kyrpides N."/>
            <person name="Mikhailova N."/>
            <person name="Romine M.F."/>
            <person name="Fredrickson J."/>
            <person name="Tiedje J."/>
            <person name="Richardson P."/>
        </authorList>
    </citation>
    <scope>NUCLEOTIDE SEQUENCE [LARGE SCALE GENOMIC DNA]</scope>
    <source>
        <strain>CN-32 / ATCC BAA-453</strain>
    </source>
</reference>
<gene>
    <name evidence="1" type="primary">slmA</name>
    <name type="ordered locus">Sputcn32_0459</name>
</gene>
<accession>A4Y2K8</accession>
<feature type="chain" id="PRO_1000070530" description="Nucleoid occlusion factor SlmA">
    <location>
        <begin position="1"/>
        <end position="197"/>
    </location>
</feature>
<feature type="domain" description="HTH tetR-type" evidence="1">
    <location>
        <begin position="7"/>
        <end position="67"/>
    </location>
</feature>
<feature type="DNA-binding region" description="H-T-H motif" evidence="1">
    <location>
        <begin position="30"/>
        <end position="49"/>
    </location>
</feature>
<feature type="coiled-coil region" evidence="1">
    <location>
        <begin position="110"/>
        <end position="130"/>
    </location>
</feature>
<sequence length="197" mass="22695">MAVSPKINRREHILQCLAQMLETSPGQRITTAKLASEVGVSEAALYRHFPSKARMFEGLIEFIEESLLSRINIIMDDEKDTMKRCQLMLQLLLIFAERNPGISRVLNGDALLGENERLRSRISSLFAKIETQLKQILREKTLREGRGFNLDEAILANLLLAFAEGRIAQFVRSEFKLKPTTHFDEQWRFIQHQLLQS</sequence>
<proteinExistence type="inferred from homology"/>
<name>SLMA_SHEPC</name>
<protein>
    <recommendedName>
        <fullName evidence="1">Nucleoid occlusion factor SlmA</fullName>
    </recommendedName>
</protein>
<keyword id="KW-0131">Cell cycle</keyword>
<keyword id="KW-0132">Cell division</keyword>
<keyword id="KW-0175">Coiled coil</keyword>
<keyword id="KW-0963">Cytoplasm</keyword>
<keyword id="KW-0238">DNA-binding</keyword>